<organism>
    <name type="scientific">Cupiennius salei</name>
    <name type="common">American wandering spider</name>
    <dbReference type="NCBI Taxonomy" id="6928"/>
    <lineage>
        <taxon>Eukaryota</taxon>
        <taxon>Metazoa</taxon>
        <taxon>Ecdysozoa</taxon>
        <taxon>Arthropoda</taxon>
        <taxon>Chelicerata</taxon>
        <taxon>Arachnida</taxon>
        <taxon>Araneae</taxon>
        <taxon>Araneomorphae</taxon>
        <taxon>Entelegynae</taxon>
        <taxon>Lycosoidea</taxon>
        <taxon>Ctenidae</taxon>
        <taxon>Cupiennius</taxon>
    </lineage>
</organism>
<dbReference type="GO" id="GO:0005576">
    <property type="term" value="C:extracellular region"/>
    <property type="evidence" value="ECO:0007669"/>
    <property type="project" value="UniProtKB-SubCell"/>
</dbReference>
<dbReference type="GO" id="GO:0090729">
    <property type="term" value="F:toxin activity"/>
    <property type="evidence" value="ECO:0007669"/>
    <property type="project" value="UniProtKB-KW"/>
</dbReference>
<reference key="1">
    <citation type="journal article" date="2012" name="FEBS J.">
        <title>Multicomponent venom of the spider Cupiennius salei: a bioanalytical investigation applying different strategies.</title>
        <authorList>
            <person name="Trachsel C."/>
            <person name="Siegemund D."/>
            <person name="Kampfer U."/>
            <person name="Kopp L.S."/>
            <person name="Buhr C."/>
            <person name="Grossmann J."/>
            <person name="Luthi C."/>
            <person name="Cunningham M."/>
            <person name="Nentwig W."/>
            <person name="Kuhn-Nentwig L."/>
            <person name="Schurch S."/>
            <person name="Schaller J."/>
        </authorList>
    </citation>
    <scope>PROTEIN SEQUENCE</scope>
    <scope>MASS SPECTROMETRY</scope>
    <scope>AMIDATION AT LYS-35</scope>
    <source>
        <tissue>Venom</tissue>
    </source>
</reference>
<evidence type="ECO:0000269" key="1">
    <source>
    </source>
</evidence>
<evidence type="ECO:0000303" key="2">
    <source>
    </source>
</evidence>
<evidence type="ECO:0000305" key="3"/>
<evidence type="ECO:0000305" key="4">
    <source>
    </source>
</evidence>
<accession>B3EWT6</accession>
<keyword id="KW-0027">Amidation</keyword>
<keyword id="KW-0903">Direct protein sequencing</keyword>
<keyword id="KW-0964">Secreted</keyword>
<keyword id="KW-0800">Toxin</keyword>
<feature type="peptide" id="PRO_0000421193" description="Cupiennin-2a" evidence="1">
    <location>
        <begin position="1"/>
        <end position="35"/>
    </location>
</feature>
<feature type="modified residue" description="Lysine amide" evidence="1">
    <location>
        <position position="35"/>
    </location>
</feature>
<name>TXC2A_CUPSA</name>
<proteinExistence type="evidence at protein level"/>
<comment type="subcellular location">
    <subcellularLocation>
        <location evidence="1">Secreted</location>
    </subcellularLocation>
</comment>
<comment type="tissue specificity">
    <text evidence="4">Expressed by the venom gland.</text>
</comment>
<comment type="mass spectrometry" mass="3699.224" method="Electrospray" evidence="1"/>
<comment type="similarity">
    <text evidence="3">Belongs to the cationic peptide 04 (cupiennin) family. 02 subfamily.</text>
</comment>
<sequence length="35" mass="3703">GFGTILKALAKIAGKVVKKLATKPGATYMLKENLK</sequence>
<protein>
    <recommendedName>
        <fullName evidence="2">Cupiennin-2a</fullName>
        <shortName evidence="2">Cu-2a</shortName>
    </recommendedName>
</protein>